<reference key="1">
    <citation type="submission" date="2004-09" db="EMBL/GenBank/DDBJ databases">
        <authorList>
            <consortium name="NIH - Xenopus Gene Collection (XGC) project"/>
        </authorList>
    </citation>
    <scope>NUCLEOTIDE SEQUENCE [LARGE SCALE MRNA]</scope>
    <source>
        <tissue>Embryo</tissue>
    </source>
</reference>
<keyword id="KW-1185">Reference proteome</keyword>
<sequence length="1376" mass="154441">MSEVQGTIEFSIELHKFHNVDLFQRGYYHVRASLKASSRIPHRLVATLVGQTDDPGPYPPCVYDNVVYSRMFQILYRNEDIDINDVMAFKVHLLLDGERVEDALSEVDFQLKLDLHFTDSEQQLKDMSAVPLISSRTLGLYFHPTSGLHHHVPVMFDYFHLSVISVTVHGSLIALHQPLISFARPVKASWLGKSGQELVTDNTSISMENLVFGSAYCKPPSSEGSYVPSEDCIQHAYKWHKDLCQLLLSAYSALGLCHANVLKEIPDLPHSEIEELPTERTLSQLCNQLQLLSDPEEITEQISKDLAWLRSQLLITWSHFLETVTLQPDVTSYLMQEHHTLRVRRFSEAFFYTEHEKPAVLTFQENLIQSQSNLSTEIRNSEYLAALPPLPIECLDIDGDWNSIPIIFEDRYVECPRKDYITDNALAEPANEDECEFSEESPSENTHVGSKPHSIQSTTVHENASFEKPNVGTKAQEDCSTEGPEQGFDHNQEATSVESEFVADFTPLPIPPSETSDSGAKLSLSALNEDCDQVTRCYQEPKRTPGVTYIKVKPQSQDQYKGETVLIVSSQYGNSLSLANSEAPQSESETMNSNNGMRTYEHIALHEISSTKNELISTLKSQKSRQCSHILLKSSSTELIRNSTEDTLMVKSCPRDIYEKSSLFASGCIKRSSSVISDSGIESEPSSVAWCDVHNRRMDLNSDKDLLLQLSKQHWAYGNSLEGDHMESNTSLPSGIQASLASINSLPFEEEDREMELSKLTKSVSAPQISSPEETLNDLLNNKLVGEIIHSLKKCSSEEKEEESQTAMNYYNNITNDIISELANDTHNTNGTKSPESSLANVFIQGLIPNSESGVIDDYIFNDPVVPKADDFPSVHQETILCDLNSTDDQNILDHSNKMEHVAKACSFSADPLVDVNSITHTSFSVIAPAKEIFEDFPVLHEIELSEDSVESIDQSIDNYYHELYSIEKEVSNNRTDGASELEETSASLSTVRVLERRKGVELVNLSVSCTATCLPFSSMQKDTPVIPGFSTKQALFPITRQPLGSFEVNSSNSNTDEESNERMLSFHQAKDKFRKELKFEGFLYSDQPVLASDVPYFPPEEEQTEDGIHLVVCVHGLDGNSADLRLVKTFLELGLPGANLDFLMSEKNQTDTFADFDAMTDRLIDEIVQHIQLYNLSISRISFIGHSLGTIIIRSVLTRPRFRYYLNKLHTFLSLSGPHLGTLYSNSTLVNTGLWLMQKLKKSGSLLQLTFRDNADLRKCFLYQLSQKPGLQYFKNVVLVASPQDRYVPFHSARIEMCKNATKDRHTGPVYTEMINNLLQPVIDSKDCTLIRHNVSHALPNTANTLIGRAAHIAVLDSELFLEKFFLVAGLGYFK</sequence>
<evidence type="ECO:0000256" key="1">
    <source>
        <dbReference type="SAM" id="MobiDB-lite"/>
    </source>
</evidence>
<evidence type="ECO:0000305" key="2"/>
<gene>
    <name type="primary">fam135b</name>
</gene>
<feature type="chain" id="PRO_0000314173" description="Protein FAM135B">
    <location>
        <begin position="1"/>
        <end position="1376"/>
    </location>
</feature>
<feature type="region of interest" description="Disordered" evidence="1">
    <location>
        <begin position="431"/>
        <end position="489"/>
    </location>
</feature>
<feature type="compositionally biased region" description="Acidic residues" evidence="1">
    <location>
        <begin position="431"/>
        <end position="442"/>
    </location>
</feature>
<feature type="compositionally biased region" description="Polar residues" evidence="1">
    <location>
        <begin position="443"/>
        <end position="462"/>
    </location>
</feature>
<protein>
    <recommendedName>
        <fullName>Protein FAM135B</fullName>
    </recommendedName>
</protein>
<accession>Q641I1</accession>
<proteinExistence type="evidence at transcript level"/>
<name>F135B_XENLA</name>
<comment type="similarity">
    <text evidence="2">Belongs to the FAM135 family.</text>
</comment>
<dbReference type="EMBL" id="BC082356">
    <property type="protein sequence ID" value="AAH82356.1"/>
    <property type="molecule type" value="mRNA"/>
</dbReference>
<dbReference type="RefSeq" id="NP_001087835.1">
    <property type="nucleotide sequence ID" value="NM_001094366.1"/>
</dbReference>
<dbReference type="ESTHER" id="xenla-q641i1">
    <property type="family name" value="Duf_676"/>
</dbReference>
<dbReference type="DNASU" id="447696"/>
<dbReference type="GeneID" id="447696"/>
<dbReference type="KEGG" id="xla:447696"/>
<dbReference type="AGR" id="Xenbase:XB-GENE-5763437"/>
<dbReference type="CTD" id="447696"/>
<dbReference type="Xenbase" id="XB-GENE-5763437">
    <property type="gene designation" value="fam135b.L"/>
</dbReference>
<dbReference type="OrthoDB" id="273452at2759"/>
<dbReference type="Proteomes" id="UP000186698">
    <property type="component" value="Chromosome 6L"/>
</dbReference>
<dbReference type="Bgee" id="447696">
    <property type="expression patterns" value="Expressed in brain"/>
</dbReference>
<dbReference type="GO" id="GO:0006629">
    <property type="term" value="P:lipid metabolic process"/>
    <property type="evidence" value="ECO:0000318"/>
    <property type="project" value="GO_Central"/>
</dbReference>
<dbReference type="FunFam" id="3.40.50.1820:FF:000004">
    <property type="entry name" value="Protein FAM135A isoform a"/>
    <property type="match status" value="1"/>
</dbReference>
<dbReference type="Gene3D" id="3.40.50.1820">
    <property type="entry name" value="alpha/beta hydrolase"/>
    <property type="match status" value="1"/>
</dbReference>
<dbReference type="InterPro" id="IPR029058">
    <property type="entry name" value="AB_hydrolase_fold"/>
</dbReference>
<dbReference type="InterPro" id="IPR022122">
    <property type="entry name" value="DUF3657"/>
</dbReference>
<dbReference type="InterPro" id="IPR007751">
    <property type="entry name" value="DUF676_lipase-like"/>
</dbReference>
<dbReference type="InterPro" id="IPR044294">
    <property type="entry name" value="Lipase-like"/>
</dbReference>
<dbReference type="PANTHER" id="PTHR12482">
    <property type="entry name" value="LIPASE ROG1-RELATED-RELATED"/>
    <property type="match status" value="1"/>
</dbReference>
<dbReference type="PANTHER" id="PTHR12482:SF3">
    <property type="entry name" value="PROTEIN FAM135B"/>
    <property type="match status" value="1"/>
</dbReference>
<dbReference type="Pfam" id="PF12394">
    <property type="entry name" value="DUF3657"/>
    <property type="match status" value="1"/>
</dbReference>
<dbReference type="Pfam" id="PF05057">
    <property type="entry name" value="DUF676"/>
    <property type="match status" value="1"/>
</dbReference>
<dbReference type="SUPFAM" id="SSF53474">
    <property type="entry name" value="alpha/beta-Hydrolases"/>
    <property type="match status" value="1"/>
</dbReference>
<organism>
    <name type="scientific">Xenopus laevis</name>
    <name type="common">African clawed frog</name>
    <dbReference type="NCBI Taxonomy" id="8355"/>
    <lineage>
        <taxon>Eukaryota</taxon>
        <taxon>Metazoa</taxon>
        <taxon>Chordata</taxon>
        <taxon>Craniata</taxon>
        <taxon>Vertebrata</taxon>
        <taxon>Euteleostomi</taxon>
        <taxon>Amphibia</taxon>
        <taxon>Batrachia</taxon>
        <taxon>Anura</taxon>
        <taxon>Pipoidea</taxon>
        <taxon>Pipidae</taxon>
        <taxon>Xenopodinae</taxon>
        <taxon>Xenopus</taxon>
        <taxon>Xenopus</taxon>
    </lineage>
</organism>